<evidence type="ECO:0000305" key="1"/>
<feature type="chain" id="PRO_0000274153" description="Epimerase family protein SA0724">
    <location>
        <begin position="1"/>
        <end position="300"/>
    </location>
</feature>
<protein>
    <recommendedName>
        <fullName>Epimerase family protein SA0724</fullName>
    </recommendedName>
</protein>
<name>Y724_STAAN</name>
<proteinExistence type="evidence at protein level"/>
<comment type="similarity">
    <text evidence="1">Belongs to the NAD(P)-dependent epimerase/dehydratase family. SDR39U1 subfamily.</text>
</comment>
<accession>Q7A6Q5</accession>
<reference key="1">
    <citation type="journal article" date="2001" name="Lancet">
        <title>Whole genome sequencing of meticillin-resistant Staphylococcus aureus.</title>
        <authorList>
            <person name="Kuroda M."/>
            <person name="Ohta T."/>
            <person name="Uchiyama I."/>
            <person name="Baba T."/>
            <person name="Yuzawa H."/>
            <person name="Kobayashi I."/>
            <person name="Cui L."/>
            <person name="Oguchi A."/>
            <person name="Aoki K."/>
            <person name="Nagai Y."/>
            <person name="Lian J.-Q."/>
            <person name="Ito T."/>
            <person name="Kanamori M."/>
            <person name="Matsumaru H."/>
            <person name="Maruyama A."/>
            <person name="Murakami H."/>
            <person name="Hosoyama A."/>
            <person name="Mizutani-Ui Y."/>
            <person name="Takahashi N.K."/>
            <person name="Sawano T."/>
            <person name="Inoue R."/>
            <person name="Kaito C."/>
            <person name="Sekimizu K."/>
            <person name="Hirakawa H."/>
            <person name="Kuhara S."/>
            <person name="Goto S."/>
            <person name="Yabuzaki J."/>
            <person name="Kanehisa M."/>
            <person name="Yamashita A."/>
            <person name="Oshima K."/>
            <person name="Furuya K."/>
            <person name="Yoshino C."/>
            <person name="Shiba T."/>
            <person name="Hattori M."/>
            <person name="Ogasawara N."/>
            <person name="Hayashi H."/>
            <person name="Hiramatsu K."/>
        </authorList>
    </citation>
    <scope>NUCLEOTIDE SEQUENCE [LARGE SCALE GENOMIC DNA]</scope>
    <source>
        <strain>N315</strain>
    </source>
</reference>
<reference key="2">
    <citation type="submission" date="2007-10" db="UniProtKB">
        <title>Shotgun proteomic analysis of total and membrane protein extracts of S. aureus strain N315.</title>
        <authorList>
            <person name="Vaezzadeh A.R."/>
            <person name="Deshusses J."/>
            <person name="Lescuyer P."/>
            <person name="Hochstrasser D.F."/>
        </authorList>
    </citation>
    <scope>IDENTIFICATION BY MASS SPECTROMETRY [LARGE SCALE ANALYSIS]</scope>
    <source>
        <strain>N315</strain>
    </source>
</reference>
<sequence length="300" mass="34273">MKQYLITGGTGMVGSQLVNEIKKSDSHITILTRHDQISNDKKISYVNWAKSGWEHKVPQNIDVVINLAGATLNKRWTPEYKQTLMLSRIQSTQALYELFKSRNKAPKVLFNASATGYYPPDLFMSYTEVYKTLPFDFLSDIVYQWERFAQQFEQLGTRVVIGRFGMILSNEGGALQTMKLPYKYYIGGKLGSGQQWYSWIHINDLIQAILFLINNESASGPFNLTAPIPERQNLFGYTLARAMHKPHETWAPSLAMRLILGQMSTVVLDTQKVLPNKIQALGFQFKYSNLKMALEDLIKE</sequence>
<gene>
    <name type="ordered locus">SA0724</name>
</gene>
<dbReference type="EMBL" id="BA000018">
    <property type="protein sequence ID" value="BAB41957.1"/>
    <property type="molecule type" value="Genomic_DNA"/>
</dbReference>
<dbReference type="PIR" id="B89850">
    <property type="entry name" value="B89850"/>
</dbReference>
<dbReference type="RefSeq" id="WP_000816304.1">
    <property type="nucleotide sequence ID" value="NC_002745.2"/>
</dbReference>
<dbReference type="SMR" id="Q7A6Q5"/>
<dbReference type="EnsemblBacteria" id="BAB41957">
    <property type="protein sequence ID" value="BAB41957"/>
    <property type="gene ID" value="BAB41957"/>
</dbReference>
<dbReference type="KEGG" id="sau:SA0724"/>
<dbReference type="HOGENOM" id="CLU_047373_0_3_9"/>
<dbReference type="Gene3D" id="3.40.50.720">
    <property type="entry name" value="NAD(P)-binding Rossmann-like Domain"/>
    <property type="match status" value="1"/>
</dbReference>
<dbReference type="InterPro" id="IPR013549">
    <property type="entry name" value="DUF1731"/>
</dbReference>
<dbReference type="InterPro" id="IPR001509">
    <property type="entry name" value="Epimerase_deHydtase"/>
</dbReference>
<dbReference type="InterPro" id="IPR036291">
    <property type="entry name" value="NAD(P)-bd_dom_sf"/>
</dbReference>
<dbReference type="InterPro" id="IPR010099">
    <property type="entry name" value="SDR39U1"/>
</dbReference>
<dbReference type="NCBIfam" id="TIGR01777">
    <property type="entry name" value="yfcH"/>
    <property type="match status" value="1"/>
</dbReference>
<dbReference type="PANTHER" id="PTHR11092:SF0">
    <property type="entry name" value="EPIMERASE FAMILY PROTEIN SDR39U1"/>
    <property type="match status" value="1"/>
</dbReference>
<dbReference type="PANTHER" id="PTHR11092">
    <property type="entry name" value="SUGAR NUCLEOTIDE EPIMERASE RELATED"/>
    <property type="match status" value="1"/>
</dbReference>
<dbReference type="Pfam" id="PF08338">
    <property type="entry name" value="DUF1731"/>
    <property type="match status" value="1"/>
</dbReference>
<dbReference type="Pfam" id="PF01370">
    <property type="entry name" value="Epimerase"/>
    <property type="match status" value="1"/>
</dbReference>
<dbReference type="SUPFAM" id="SSF51735">
    <property type="entry name" value="NAD(P)-binding Rossmann-fold domains"/>
    <property type="match status" value="1"/>
</dbReference>
<organism>
    <name type="scientific">Staphylococcus aureus (strain N315)</name>
    <dbReference type="NCBI Taxonomy" id="158879"/>
    <lineage>
        <taxon>Bacteria</taxon>
        <taxon>Bacillati</taxon>
        <taxon>Bacillota</taxon>
        <taxon>Bacilli</taxon>
        <taxon>Bacillales</taxon>
        <taxon>Staphylococcaceae</taxon>
        <taxon>Staphylococcus</taxon>
    </lineage>
</organism>